<accession>C0HKP5</accession>
<proteinExistence type="evidence at protein level"/>
<comment type="function">
    <text evidence="1">Antimicrobial peptide.</text>
</comment>
<comment type="subcellular location">
    <subcellularLocation>
        <location evidence="2">Secreted</location>
    </subcellularLocation>
</comment>
<comment type="tissue specificity">
    <text evidence="5">Expressed by the skin glands.</text>
</comment>
<comment type="mass spectrometry" mass="2690.1" method="MALDI" evidence="2"/>
<comment type="similarity">
    <text evidence="4">Belongs to the gastrin/cholecystokinin family. Magainin subfamily.</text>
</comment>
<evidence type="ECO:0000250" key="1">
    <source>
        <dbReference type="UniProtKB" id="C0HK86"/>
    </source>
</evidence>
<evidence type="ECO:0000269" key="2">
    <source>
    </source>
</evidence>
<evidence type="ECO:0000303" key="3">
    <source>
    </source>
</evidence>
<evidence type="ECO:0000305" key="4"/>
<evidence type="ECO:0000305" key="5">
    <source>
    </source>
</evidence>
<reference evidence="4" key="1">
    <citation type="journal article" date="2016" name="Comp. Biochem. Physiol.">
        <title>Peptidomic analysis of the extensive array of host-defense peptides in skin secretions of the dodecaploid frog Xenopus ruwenzoriensis (Pipidae).</title>
        <authorList>
            <person name="Coquet L."/>
            <person name="Kolodziejek J."/>
            <person name="Jouenne T."/>
            <person name="Nowotny N."/>
            <person name="King J.D."/>
            <person name="Conlon J.M."/>
        </authorList>
    </citation>
    <scope>PROTEIN SEQUENCE</scope>
    <scope>SUBCELLULAR LOCATION</scope>
    <scope>MASS SPECTROMETRY</scope>
    <source>
        <tissue evidence="3">Skin secretion</tissue>
    </source>
</reference>
<organism evidence="3">
    <name type="scientific">Xenopus ruwenzoriensis</name>
    <name type="common">Uganda clawed frog</name>
    <dbReference type="NCBI Taxonomy" id="105430"/>
    <lineage>
        <taxon>Eukaryota</taxon>
        <taxon>Metazoa</taxon>
        <taxon>Chordata</taxon>
        <taxon>Craniata</taxon>
        <taxon>Vertebrata</taxon>
        <taxon>Euteleostomi</taxon>
        <taxon>Amphibia</taxon>
        <taxon>Batrachia</taxon>
        <taxon>Anura</taxon>
        <taxon>Pipoidea</taxon>
        <taxon>Pipidae</taxon>
        <taxon>Xenopodinae</taxon>
        <taxon>Xenopus</taxon>
        <taxon>Xenopus</taxon>
    </lineage>
</organism>
<sequence length="25" mass="2691">GWASKIGQTLGKMAKVGLHELIQPK</sequence>
<keyword id="KW-0878">Amphibian defense peptide</keyword>
<keyword id="KW-0929">Antimicrobial</keyword>
<keyword id="KW-0903">Direct protein sequencing</keyword>
<keyword id="KW-0964">Secreted</keyword>
<dbReference type="GO" id="GO:0005576">
    <property type="term" value="C:extracellular region"/>
    <property type="evidence" value="ECO:0007669"/>
    <property type="project" value="UniProtKB-SubCell"/>
</dbReference>
<dbReference type="GO" id="GO:0006952">
    <property type="term" value="P:defense response"/>
    <property type="evidence" value="ECO:0007669"/>
    <property type="project" value="UniProtKB-KW"/>
</dbReference>
<feature type="peptide" id="PRO_0000440932" description="Xenoposin precursor fragment R1" evidence="2">
    <location>
        <begin position="1"/>
        <end position="25"/>
    </location>
</feature>
<name>XPFR1_XENRU</name>
<protein>
    <recommendedName>
        <fullName evidence="3">Xenoposin precursor fragment R1</fullName>
    </recommendedName>
    <alternativeName>
        <fullName evidence="3">XPF-R1</fullName>
    </alternativeName>
</protein>